<protein>
    <recommendedName>
        <fullName evidence="1">S-adenosylmethionine synthase</fullName>
        <shortName evidence="1">AdoMet synthase</shortName>
        <ecNumber evidence="1">2.5.1.6</ecNumber>
    </recommendedName>
    <alternativeName>
        <fullName evidence="1">MAT</fullName>
    </alternativeName>
    <alternativeName>
        <fullName evidence="1">Methionine adenosyltransferase</fullName>
    </alternativeName>
</protein>
<proteinExistence type="inferred from homology"/>
<keyword id="KW-0067">ATP-binding</keyword>
<keyword id="KW-0963">Cytoplasm</keyword>
<keyword id="KW-0460">Magnesium</keyword>
<keyword id="KW-0479">Metal-binding</keyword>
<keyword id="KW-0547">Nucleotide-binding</keyword>
<keyword id="KW-0554">One-carbon metabolism</keyword>
<keyword id="KW-0630">Potassium</keyword>
<keyword id="KW-0808">Transferase</keyword>
<feature type="chain" id="PRO_1000093099" description="S-adenosylmethionine synthase">
    <location>
        <begin position="1"/>
        <end position="384"/>
    </location>
</feature>
<feature type="region of interest" description="Flexible loop" evidence="1">
    <location>
        <begin position="99"/>
        <end position="109"/>
    </location>
</feature>
<feature type="binding site" description="in other chain" evidence="1">
    <location>
        <position position="15"/>
    </location>
    <ligand>
        <name>ATP</name>
        <dbReference type="ChEBI" id="CHEBI:30616"/>
        <note>ligand shared between two neighboring subunits</note>
    </ligand>
</feature>
<feature type="binding site" evidence="1">
    <location>
        <position position="17"/>
    </location>
    <ligand>
        <name>Mg(2+)</name>
        <dbReference type="ChEBI" id="CHEBI:18420"/>
    </ligand>
</feature>
<feature type="binding site" evidence="1">
    <location>
        <position position="43"/>
    </location>
    <ligand>
        <name>K(+)</name>
        <dbReference type="ChEBI" id="CHEBI:29103"/>
    </ligand>
</feature>
<feature type="binding site" description="in other chain" evidence="1">
    <location>
        <position position="56"/>
    </location>
    <ligand>
        <name>L-methionine</name>
        <dbReference type="ChEBI" id="CHEBI:57844"/>
        <note>ligand shared between two neighboring subunits</note>
    </ligand>
</feature>
<feature type="binding site" description="in other chain" evidence="1">
    <location>
        <position position="99"/>
    </location>
    <ligand>
        <name>L-methionine</name>
        <dbReference type="ChEBI" id="CHEBI:57844"/>
        <note>ligand shared between two neighboring subunits</note>
    </ligand>
</feature>
<feature type="binding site" description="in other chain" evidence="1">
    <location>
        <begin position="164"/>
        <end position="166"/>
    </location>
    <ligand>
        <name>ATP</name>
        <dbReference type="ChEBI" id="CHEBI:30616"/>
        <note>ligand shared between two neighboring subunits</note>
    </ligand>
</feature>
<feature type="binding site" description="in other chain" evidence="1">
    <location>
        <begin position="230"/>
        <end position="231"/>
    </location>
    <ligand>
        <name>ATP</name>
        <dbReference type="ChEBI" id="CHEBI:30616"/>
        <note>ligand shared between two neighboring subunits</note>
    </ligand>
</feature>
<feature type="binding site" evidence="1">
    <location>
        <position position="239"/>
    </location>
    <ligand>
        <name>ATP</name>
        <dbReference type="ChEBI" id="CHEBI:30616"/>
        <note>ligand shared between two neighboring subunits</note>
    </ligand>
</feature>
<feature type="binding site" evidence="1">
    <location>
        <position position="239"/>
    </location>
    <ligand>
        <name>L-methionine</name>
        <dbReference type="ChEBI" id="CHEBI:57844"/>
        <note>ligand shared between two neighboring subunits</note>
    </ligand>
</feature>
<feature type="binding site" description="in other chain" evidence="1">
    <location>
        <begin position="245"/>
        <end position="246"/>
    </location>
    <ligand>
        <name>ATP</name>
        <dbReference type="ChEBI" id="CHEBI:30616"/>
        <note>ligand shared between two neighboring subunits</note>
    </ligand>
</feature>
<feature type="binding site" evidence="1">
    <location>
        <position position="262"/>
    </location>
    <ligand>
        <name>ATP</name>
        <dbReference type="ChEBI" id="CHEBI:30616"/>
        <note>ligand shared between two neighboring subunits</note>
    </ligand>
</feature>
<feature type="binding site" evidence="1">
    <location>
        <position position="266"/>
    </location>
    <ligand>
        <name>ATP</name>
        <dbReference type="ChEBI" id="CHEBI:30616"/>
        <note>ligand shared between two neighboring subunits</note>
    </ligand>
</feature>
<feature type="binding site" description="in other chain" evidence="1">
    <location>
        <position position="270"/>
    </location>
    <ligand>
        <name>L-methionine</name>
        <dbReference type="ChEBI" id="CHEBI:57844"/>
        <note>ligand shared between two neighboring subunits</note>
    </ligand>
</feature>
<organism>
    <name type="scientific">Aliivibrio fischeri (strain MJ11)</name>
    <name type="common">Vibrio fischeri</name>
    <dbReference type="NCBI Taxonomy" id="388396"/>
    <lineage>
        <taxon>Bacteria</taxon>
        <taxon>Pseudomonadati</taxon>
        <taxon>Pseudomonadota</taxon>
        <taxon>Gammaproteobacteria</taxon>
        <taxon>Vibrionales</taxon>
        <taxon>Vibrionaceae</taxon>
        <taxon>Aliivibrio</taxon>
    </lineage>
</organism>
<sequence>MAKHLFTSESVSEGHPDKIADQISDAVLDAILEQDPKARVACETYVKTGMVMVGGEVTTSAWVDIEEITRETVREIGYVHSDMGFDANSCAVLNTIGKQSPDINQGVDKADPKEQGAGDQGIMFGYATNETPILMPAPITYSHLLVQKQAEVRKSGKLDFLRPDAKSQVTFQYDQGKIVGIDAVVLSTQHCDSVTTPDLREAVMEEIIKPVLPAEWLNKDTNFFINPTGRFVIGGPMGDCGLTGRKIIVDTYGGAARHGGGAFSGKDPSKVDRSAAYAARYVAKNIVAAGMADRCEIQLSYAIGVADPTSIMVETFGTEKVSHDIIIEAVRQNFDLRPYGLQEMLNLLQPIYKKTAAYGHFGREEFPWEATDKAAILRDFAGIK</sequence>
<name>METK_ALIFM</name>
<comment type="function">
    <text evidence="1">Catalyzes the formation of S-adenosylmethionine (AdoMet) from methionine and ATP. The overall synthetic reaction is composed of two sequential steps, AdoMet formation and the subsequent tripolyphosphate hydrolysis which occurs prior to release of AdoMet from the enzyme.</text>
</comment>
<comment type="catalytic activity">
    <reaction evidence="1">
        <text>L-methionine + ATP + H2O = S-adenosyl-L-methionine + phosphate + diphosphate</text>
        <dbReference type="Rhea" id="RHEA:21080"/>
        <dbReference type="ChEBI" id="CHEBI:15377"/>
        <dbReference type="ChEBI" id="CHEBI:30616"/>
        <dbReference type="ChEBI" id="CHEBI:33019"/>
        <dbReference type="ChEBI" id="CHEBI:43474"/>
        <dbReference type="ChEBI" id="CHEBI:57844"/>
        <dbReference type="ChEBI" id="CHEBI:59789"/>
        <dbReference type="EC" id="2.5.1.6"/>
    </reaction>
</comment>
<comment type="cofactor">
    <cofactor evidence="1">
        <name>Mg(2+)</name>
        <dbReference type="ChEBI" id="CHEBI:18420"/>
    </cofactor>
    <text evidence="1">Binds 2 divalent ions per subunit.</text>
</comment>
<comment type="cofactor">
    <cofactor evidence="1">
        <name>K(+)</name>
        <dbReference type="ChEBI" id="CHEBI:29103"/>
    </cofactor>
    <text evidence="1">Binds 1 potassium ion per subunit.</text>
</comment>
<comment type="pathway">
    <text evidence="1">Amino-acid biosynthesis; S-adenosyl-L-methionine biosynthesis; S-adenosyl-L-methionine from L-methionine: step 1/1.</text>
</comment>
<comment type="subunit">
    <text evidence="1">Homotetramer; dimer of dimers.</text>
</comment>
<comment type="subcellular location">
    <subcellularLocation>
        <location evidence="1">Cytoplasm</location>
    </subcellularLocation>
</comment>
<comment type="similarity">
    <text evidence="1">Belongs to the AdoMet synthase family.</text>
</comment>
<evidence type="ECO:0000255" key="1">
    <source>
        <dbReference type="HAMAP-Rule" id="MF_00086"/>
    </source>
</evidence>
<dbReference type="EC" id="2.5.1.6" evidence="1"/>
<dbReference type="EMBL" id="CP001139">
    <property type="protein sequence ID" value="ACH66583.1"/>
    <property type="molecule type" value="Genomic_DNA"/>
</dbReference>
<dbReference type="RefSeq" id="WP_005417583.1">
    <property type="nucleotide sequence ID" value="NC_011184.1"/>
</dbReference>
<dbReference type="SMR" id="B5F9T2"/>
<dbReference type="GeneID" id="54163076"/>
<dbReference type="KEGG" id="vfm:VFMJ11_0439"/>
<dbReference type="HOGENOM" id="CLU_041802_1_1_6"/>
<dbReference type="UniPathway" id="UPA00315">
    <property type="reaction ID" value="UER00080"/>
</dbReference>
<dbReference type="Proteomes" id="UP000001857">
    <property type="component" value="Chromosome I"/>
</dbReference>
<dbReference type="GO" id="GO:0005737">
    <property type="term" value="C:cytoplasm"/>
    <property type="evidence" value="ECO:0007669"/>
    <property type="project" value="UniProtKB-SubCell"/>
</dbReference>
<dbReference type="GO" id="GO:0005524">
    <property type="term" value="F:ATP binding"/>
    <property type="evidence" value="ECO:0007669"/>
    <property type="project" value="UniProtKB-UniRule"/>
</dbReference>
<dbReference type="GO" id="GO:0000287">
    <property type="term" value="F:magnesium ion binding"/>
    <property type="evidence" value="ECO:0007669"/>
    <property type="project" value="UniProtKB-UniRule"/>
</dbReference>
<dbReference type="GO" id="GO:0004478">
    <property type="term" value="F:methionine adenosyltransferase activity"/>
    <property type="evidence" value="ECO:0007669"/>
    <property type="project" value="UniProtKB-UniRule"/>
</dbReference>
<dbReference type="GO" id="GO:0006730">
    <property type="term" value="P:one-carbon metabolic process"/>
    <property type="evidence" value="ECO:0007669"/>
    <property type="project" value="UniProtKB-KW"/>
</dbReference>
<dbReference type="GO" id="GO:0006556">
    <property type="term" value="P:S-adenosylmethionine biosynthetic process"/>
    <property type="evidence" value="ECO:0007669"/>
    <property type="project" value="UniProtKB-UniRule"/>
</dbReference>
<dbReference type="CDD" id="cd18079">
    <property type="entry name" value="S-AdoMet_synt"/>
    <property type="match status" value="1"/>
</dbReference>
<dbReference type="FunFam" id="3.30.300.10:FF:000001">
    <property type="entry name" value="S-adenosylmethionine synthase"/>
    <property type="match status" value="1"/>
</dbReference>
<dbReference type="FunFam" id="3.30.300.10:FF:000003">
    <property type="entry name" value="S-adenosylmethionine synthase"/>
    <property type="match status" value="1"/>
</dbReference>
<dbReference type="Gene3D" id="3.30.300.10">
    <property type="match status" value="3"/>
</dbReference>
<dbReference type="HAMAP" id="MF_00086">
    <property type="entry name" value="S_AdoMet_synth1"/>
    <property type="match status" value="1"/>
</dbReference>
<dbReference type="InterPro" id="IPR022631">
    <property type="entry name" value="ADOMET_SYNTHASE_CS"/>
</dbReference>
<dbReference type="InterPro" id="IPR022630">
    <property type="entry name" value="S-AdoMet_synt_C"/>
</dbReference>
<dbReference type="InterPro" id="IPR022629">
    <property type="entry name" value="S-AdoMet_synt_central"/>
</dbReference>
<dbReference type="InterPro" id="IPR022628">
    <property type="entry name" value="S-AdoMet_synt_N"/>
</dbReference>
<dbReference type="InterPro" id="IPR002133">
    <property type="entry name" value="S-AdoMet_synthetase"/>
</dbReference>
<dbReference type="InterPro" id="IPR022636">
    <property type="entry name" value="S-AdoMet_synthetase_sfam"/>
</dbReference>
<dbReference type="NCBIfam" id="TIGR01034">
    <property type="entry name" value="metK"/>
    <property type="match status" value="1"/>
</dbReference>
<dbReference type="PANTHER" id="PTHR11964">
    <property type="entry name" value="S-ADENOSYLMETHIONINE SYNTHETASE"/>
    <property type="match status" value="1"/>
</dbReference>
<dbReference type="Pfam" id="PF02773">
    <property type="entry name" value="S-AdoMet_synt_C"/>
    <property type="match status" value="1"/>
</dbReference>
<dbReference type="Pfam" id="PF02772">
    <property type="entry name" value="S-AdoMet_synt_M"/>
    <property type="match status" value="1"/>
</dbReference>
<dbReference type="Pfam" id="PF00438">
    <property type="entry name" value="S-AdoMet_synt_N"/>
    <property type="match status" value="1"/>
</dbReference>
<dbReference type="PIRSF" id="PIRSF000497">
    <property type="entry name" value="MAT"/>
    <property type="match status" value="1"/>
</dbReference>
<dbReference type="SUPFAM" id="SSF55973">
    <property type="entry name" value="S-adenosylmethionine synthetase"/>
    <property type="match status" value="3"/>
</dbReference>
<dbReference type="PROSITE" id="PS00376">
    <property type="entry name" value="ADOMET_SYNTHASE_1"/>
    <property type="match status" value="1"/>
</dbReference>
<dbReference type="PROSITE" id="PS00377">
    <property type="entry name" value="ADOMET_SYNTHASE_2"/>
    <property type="match status" value="1"/>
</dbReference>
<reference key="1">
    <citation type="submission" date="2008-08" db="EMBL/GenBank/DDBJ databases">
        <title>Complete sequence of Vibrio fischeri strain MJ11.</title>
        <authorList>
            <person name="Mandel M.J."/>
            <person name="Stabb E.V."/>
            <person name="Ruby E.G."/>
            <person name="Ferriera S."/>
            <person name="Johnson J."/>
            <person name="Kravitz S."/>
            <person name="Beeson K."/>
            <person name="Sutton G."/>
            <person name="Rogers Y.-H."/>
            <person name="Friedman R."/>
            <person name="Frazier M."/>
            <person name="Venter J.C."/>
        </authorList>
    </citation>
    <scope>NUCLEOTIDE SEQUENCE [LARGE SCALE GENOMIC DNA]</scope>
    <source>
        <strain>MJ11</strain>
    </source>
</reference>
<accession>B5F9T2</accession>
<gene>
    <name evidence="1" type="primary">metK</name>
    <name type="ordered locus">VFMJ11_0439</name>
</gene>